<comment type="function">
    <text evidence="1">Binds directly to 23S ribosomal RNA and is necessary for the in vitro assembly process of the 50S ribosomal subunit. It is not involved in the protein synthesizing functions of that subunit.</text>
</comment>
<comment type="similarity">
    <text evidence="1">Belongs to the bacterial ribosomal protein bL20 family.</text>
</comment>
<feature type="chain" id="PRO_0000177106" description="Large ribosomal subunit protein bL20">
    <location>
        <begin position="1"/>
        <end position="119"/>
    </location>
</feature>
<protein>
    <recommendedName>
        <fullName evidence="1">Large ribosomal subunit protein bL20</fullName>
    </recommendedName>
    <alternativeName>
        <fullName evidence="2">50S ribosomal protein L20</fullName>
    </alternativeName>
</protein>
<proteinExistence type="inferred from homology"/>
<sequence>MARVKRGVVAHRRHKKILARAKGYYGARSRVYRVAFQAVIKAGQYAYRDRRQKKRQFRALWIARINAGARQNGLSYSRMIDGLKKAQVIIDRRVLADIAMHDAVAFAALAEKAKGALAA</sequence>
<reference key="1">
    <citation type="journal article" date="2004" name="Nucleic Acids Res.">
        <title>Unique features revealed by the genome sequence of Acinetobacter sp. ADP1, a versatile and naturally transformation competent bacterium.</title>
        <authorList>
            <person name="Barbe V."/>
            <person name="Vallenet D."/>
            <person name="Fonknechten N."/>
            <person name="Kreimeyer A."/>
            <person name="Oztas S."/>
            <person name="Labarre L."/>
            <person name="Cruveiller S."/>
            <person name="Robert C."/>
            <person name="Duprat S."/>
            <person name="Wincker P."/>
            <person name="Ornston L.N."/>
            <person name="Weissenbach J."/>
            <person name="Marliere P."/>
            <person name="Cohen G.N."/>
            <person name="Medigue C."/>
        </authorList>
    </citation>
    <scope>NUCLEOTIDE SEQUENCE [LARGE SCALE GENOMIC DNA]</scope>
    <source>
        <strain>ATCC 33305 / BD413 / ADP1</strain>
    </source>
</reference>
<name>RL20_ACIAD</name>
<gene>
    <name evidence="1" type="primary">rplT</name>
    <name type="ordered locus">ACIAD3046</name>
</gene>
<accession>Q6F868</accession>
<dbReference type="EMBL" id="CR543861">
    <property type="protein sequence ID" value="CAG69747.1"/>
    <property type="molecule type" value="Genomic_DNA"/>
</dbReference>
<dbReference type="RefSeq" id="WP_000124858.1">
    <property type="nucleotide sequence ID" value="NC_005966.1"/>
</dbReference>
<dbReference type="SMR" id="Q6F868"/>
<dbReference type="STRING" id="202950.GCA_001485005_02707"/>
<dbReference type="GeneID" id="9383733"/>
<dbReference type="KEGG" id="aci:ACIAD3046"/>
<dbReference type="eggNOG" id="COG0292">
    <property type="taxonomic scope" value="Bacteria"/>
</dbReference>
<dbReference type="HOGENOM" id="CLU_123265_0_1_6"/>
<dbReference type="OrthoDB" id="9808966at2"/>
<dbReference type="BioCyc" id="ASP62977:ACIAD_RS13770-MONOMER"/>
<dbReference type="Proteomes" id="UP000000430">
    <property type="component" value="Chromosome"/>
</dbReference>
<dbReference type="GO" id="GO:1990904">
    <property type="term" value="C:ribonucleoprotein complex"/>
    <property type="evidence" value="ECO:0007669"/>
    <property type="project" value="UniProtKB-KW"/>
</dbReference>
<dbReference type="GO" id="GO:0005840">
    <property type="term" value="C:ribosome"/>
    <property type="evidence" value="ECO:0007669"/>
    <property type="project" value="UniProtKB-KW"/>
</dbReference>
<dbReference type="GO" id="GO:0019843">
    <property type="term" value="F:rRNA binding"/>
    <property type="evidence" value="ECO:0007669"/>
    <property type="project" value="UniProtKB-UniRule"/>
</dbReference>
<dbReference type="GO" id="GO:0003735">
    <property type="term" value="F:structural constituent of ribosome"/>
    <property type="evidence" value="ECO:0007669"/>
    <property type="project" value="InterPro"/>
</dbReference>
<dbReference type="GO" id="GO:0000027">
    <property type="term" value="P:ribosomal large subunit assembly"/>
    <property type="evidence" value="ECO:0007669"/>
    <property type="project" value="UniProtKB-UniRule"/>
</dbReference>
<dbReference type="GO" id="GO:0006412">
    <property type="term" value="P:translation"/>
    <property type="evidence" value="ECO:0007669"/>
    <property type="project" value="InterPro"/>
</dbReference>
<dbReference type="CDD" id="cd07026">
    <property type="entry name" value="Ribosomal_L20"/>
    <property type="match status" value="1"/>
</dbReference>
<dbReference type="FunFam" id="1.10.1900.20:FF:000001">
    <property type="entry name" value="50S ribosomal protein L20"/>
    <property type="match status" value="1"/>
</dbReference>
<dbReference type="Gene3D" id="6.10.160.10">
    <property type="match status" value="1"/>
</dbReference>
<dbReference type="Gene3D" id="1.10.1900.20">
    <property type="entry name" value="Ribosomal protein L20"/>
    <property type="match status" value="1"/>
</dbReference>
<dbReference type="HAMAP" id="MF_00382">
    <property type="entry name" value="Ribosomal_bL20"/>
    <property type="match status" value="1"/>
</dbReference>
<dbReference type="InterPro" id="IPR005813">
    <property type="entry name" value="Ribosomal_bL20"/>
</dbReference>
<dbReference type="InterPro" id="IPR049946">
    <property type="entry name" value="RIBOSOMAL_L20_CS"/>
</dbReference>
<dbReference type="InterPro" id="IPR035566">
    <property type="entry name" value="Ribosomal_protein_bL20_C"/>
</dbReference>
<dbReference type="NCBIfam" id="TIGR01032">
    <property type="entry name" value="rplT_bact"/>
    <property type="match status" value="1"/>
</dbReference>
<dbReference type="PANTHER" id="PTHR10986">
    <property type="entry name" value="39S RIBOSOMAL PROTEIN L20"/>
    <property type="match status" value="1"/>
</dbReference>
<dbReference type="Pfam" id="PF00453">
    <property type="entry name" value="Ribosomal_L20"/>
    <property type="match status" value="1"/>
</dbReference>
<dbReference type="PRINTS" id="PR00062">
    <property type="entry name" value="RIBOSOMALL20"/>
</dbReference>
<dbReference type="SUPFAM" id="SSF74731">
    <property type="entry name" value="Ribosomal protein L20"/>
    <property type="match status" value="1"/>
</dbReference>
<dbReference type="PROSITE" id="PS00937">
    <property type="entry name" value="RIBOSOMAL_L20"/>
    <property type="match status" value="1"/>
</dbReference>
<organism>
    <name type="scientific">Acinetobacter baylyi (strain ATCC 33305 / BD413 / ADP1)</name>
    <dbReference type="NCBI Taxonomy" id="62977"/>
    <lineage>
        <taxon>Bacteria</taxon>
        <taxon>Pseudomonadati</taxon>
        <taxon>Pseudomonadota</taxon>
        <taxon>Gammaproteobacteria</taxon>
        <taxon>Moraxellales</taxon>
        <taxon>Moraxellaceae</taxon>
        <taxon>Acinetobacter</taxon>
    </lineage>
</organism>
<evidence type="ECO:0000255" key="1">
    <source>
        <dbReference type="HAMAP-Rule" id="MF_00382"/>
    </source>
</evidence>
<evidence type="ECO:0000305" key="2"/>
<keyword id="KW-0687">Ribonucleoprotein</keyword>
<keyword id="KW-0689">Ribosomal protein</keyword>
<keyword id="KW-0694">RNA-binding</keyword>
<keyword id="KW-0699">rRNA-binding</keyword>